<name>GBRL1_BOVIN</name>
<reference key="1">
    <citation type="submission" date="2005-08" db="EMBL/GenBank/DDBJ databases">
        <authorList>
            <consortium name="NIH - Mammalian Gene Collection (MGC) project"/>
        </authorList>
    </citation>
    <scope>NUCLEOTIDE SEQUENCE [LARGE SCALE MRNA]</scope>
    <source>
        <strain>Hereford</strain>
        <tissue>Thymus</tissue>
    </source>
</reference>
<reference key="2">
    <citation type="journal article" date="2002" name="J. Virol.">
        <title>Cellular sequences in pestivirus genomes encoding gamma-aminobutyric acid (A) receptor-associated protein and Golgi-associated ATPase enhancer of 16 kilodaltons.</title>
        <authorList>
            <person name="Becher P."/>
            <person name="Thiel H.-J."/>
            <person name="Collins M."/>
            <person name="Brownlie J."/>
            <person name="Orlich M."/>
        </authorList>
    </citation>
    <scope>NUCLEOTIDE SEQUENCE [MRNA] OF 8-117</scope>
</reference>
<accession>Q8HYB6</accession>
<accession>Q3ZBC6</accession>
<dbReference type="EMBL" id="BC103442">
    <property type="protein sequence ID" value="AAI03443.1"/>
    <property type="molecule type" value="mRNA"/>
</dbReference>
<dbReference type="EMBL" id="AY117146">
    <property type="protein sequence ID" value="AAM77035.1"/>
    <property type="molecule type" value="mRNA"/>
</dbReference>
<dbReference type="RefSeq" id="NP_001028788.1">
    <property type="nucleotide sequence ID" value="NM_001033616.1"/>
</dbReference>
<dbReference type="SMR" id="Q8HYB6"/>
<dbReference type="FunCoup" id="Q8HYB6">
    <property type="interactions" value="1194"/>
</dbReference>
<dbReference type="STRING" id="9913.ENSBTAP00000069650"/>
<dbReference type="PaxDb" id="9913-ENSBTAP00000047993"/>
<dbReference type="Ensembl" id="ENSBTAT00000055075.3">
    <property type="protein sequence ID" value="ENSBTAP00000047993.2"/>
    <property type="gene ID" value="ENSBTAG00000011765.7"/>
</dbReference>
<dbReference type="GeneID" id="338472"/>
<dbReference type="KEGG" id="bta:338472"/>
<dbReference type="CTD" id="23710"/>
<dbReference type="VEuPathDB" id="HostDB:ENSBTAG00000011765"/>
<dbReference type="VGNC" id="VGNC:56201">
    <property type="gene designation" value="GABARAPL1"/>
</dbReference>
<dbReference type="eggNOG" id="KOG1654">
    <property type="taxonomic scope" value="Eukaryota"/>
</dbReference>
<dbReference type="GeneTree" id="ENSGT00940000156876"/>
<dbReference type="HOGENOM" id="CLU_119276_0_3_1"/>
<dbReference type="InParanoid" id="Q8HYB6"/>
<dbReference type="OMA" id="KNQIRAK"/>
<dbReference type="OrthoDB" id="6738456at2759"/>
<dbReference type="TreeFam" id="TF314556"/>
<dbReference type="Reactome" id="R-BTA-1632852">
    <property type="pathway name" value="Macroautophagy"/>
</dbReference>
<dbReference type="Proteomes" id="UP000009136">
    <property type="component" value="Chromosome 5"/>
</dbReference>
<dbReference type="Bgee" id="ENSBTAG00000011765">
    <property type="expression patterns" value="Expressed in metanephros cortex and 105 other cell types or tissues"/>
</dbReference>
<dbReference type="GO" id="GO:0000421">
    <property type="term" value="C:autophagosome membrane"/>
    <property type="evidence" value="ECO:0000318"/>
    <property type="project" value="GO_Central"/>
</dbReference>
<dbReference type="GO" id="GO:0030659">
    <property type="term" value="C:cytoplasmic vesicle membrane"/>
    <property type="evidence" value="ECO:0007669"/>
    <property type="project" value="UniProtKB-SubCell"/>
</dbReference>
<dbReference type="GO" id="GO:0005783">
    <property type="term" value="C:endoplasmic reticulum"/>
    <property type="evidence" value="ECO:0007669"/>
    <property type="project" value="UniProtKB-SubCell"/>
</dbReference>
<dbReference type="GO" id="GO:0005794">
    <property type="term" value="C:Golgi apparatus"/>
    <property type="evidence" value="ECO:0007669"/>
    <property type="project" value="UniProtKB-SubCell"/>
</dbReference>
<dbReference type="GO" id="GO:0005874">
    <property type="term" value="C:microtubule"/>
    <property type="evidence" value="ECO:0007669"/>
    <property type="project" value="UniProtKB-KW"/>
</dbReference>
<dbReference type="GO" id="GO:0050811">
    <property type="term" value="F:GABA receptor binding"/>
    <property type="evidence" value="ECO:0000318"/>
    <property type="project" value="GO_Central"/>
</dbReference>
<dbReference type="GO" id="GO:0008429">
    <property type="term" value="F:phosphatidylethanolamine binding"/>
    <property type="evidence" value="ECO:0000318"/>
    <property type="project" value="GO_Central"/>
</dbReference>
<dbReference type="GO" id="GO:0031625">
    <property type="term" value="F:ubiquitin protein ligase binding"/>
    <property type="evidence" value="ECO:0000318"/>
    <property type="project" value="GO_Central"/>
</dbReference>
<dbReference type="GO" id="GO:0000045">
    <property type="term" value="P:autophagosome assembly"/>
    <property type="evidence" value="ECO:0000318"/>
    <property type="project" value="GO_Central"/>
</dbReference>
<dbReference type="GO" id="GO:0097352">
    <property type="term" value="P:autophagosome maturation"/>
    <property type="evidence" value="ECO:0000318"/>
    <property type="project" value="GO_Central"/>
</dbReference>
<dbReference type="GO" id="GO:0006995">
    <property type="term" value="P:cellular response to nitrogen starvation"/>
    <property type="evidence" value="ECO:0000318"/>
    <property type="project" value="GO_Central"/>
</dbReference>
<dbReference type="GO" id="GO:0000423">
    <property type="term" value="P:mitophagy"/>
    <property type="evidence" value="ECO:0000318"/>
    <property type="project" value="GO_Central"/>
</dbReference>
<dbReference type="CDD" id="cd16127">
    <property type="entry name" value="Ubl_ATG8_GABARAP_like"/>
    <property type="match status" value="1"/>
</dbReference>
<dbReference type="FunFam" id="3.10.20.90:FF:000037">
    <property type="entry name" value="Gamma-aminobutyric acid receptor-associated protein-like 1"/>
    <property type="match status" value="1"/>
</dbReference>
<dbReference type="Gene3D" id="3.10.20.90">
    <property type="entry name" value="Phosphatidylinositol 3-kinase Catalytic Subunit, Chain A, domain 1"/>
    <property type="match status" value="1"/>
</dbReference>
<dbReference type="InterPro" id="IPR004241">
    <property type="entry name" value="Atg8-like"/>
</dbReference>
<dbReference type="InterPro" id="IPR029071">
    <property type="entry name" value="Ubiquitin-like_domsf"/>
</dbReference>
<dbReference type="PANTHER" id="PTHR10969">
    <property type="entry name" value="MICROTUBULE-ASSOCIATED PROTEINS 1A/1B LIGHT CHAIN 3-RELATED"/>
    <property type="match status" value="1"/>
</dbReference>
<dbReference type="Pfam" id="PF02991">
    <property type="entry name" value="ATG8"/>
    <property type="match status" value="1"/>
</dbReference>
<dbReference type="SUPFAM" id="SSF54236">
    <property type="entry name" value="Ubiquitin-like"/>
    <property type="match status" value="1"/>
</dbReference>
<organism>
    <name type="scientific">Bos taurus</name>
    <name type="common">Bovine</name>
    <dbReference type="NCBI Taxonomy" id="9913"/>
    <lineage>
        <taxon>Eukaryota</taxon>
        <taxon>Metazoa</taxon>
        <taxon>Chordata</taxon>
        <taxon>Craniata</taxon>
        <taxon>Vertebrata</taxon>
        <taxon>Euteleostomi</taxon>
        <taxon>Mammalia</taxon>
        <taxon>Eutheria</taxon>
        <taxon>Laurasiatheria</taxon>
        <taxon>Artiodactyla</taxon>
        <taxon>Ruminantia</taxon>
        <taxon>Pecora</taxon>
        <taxon>Bovidae</taxon>
        <taxon>Bovinae</taxon>
        <taxon>Bos</taxon>
    </lineage>
</organism>
<sequence>MKFQYKEDHPFEYRKKEGEKIRKKYPDRVPVIVEKAPKARVPDLDKRKYLVPSDLTVGQFYFLIRKRIHLRPEDALFFFVNNTIPPTSATMGQLYEDNHEEDYFLYVAYSDESVYGK</sequence>
<keyword id="KW-0072">Autophagy</keyword>
<keyword id="KW-0963">Cytoplasm</keyword>
<keyword id="KW-0968">Cytoplasmic vesicle</keyword>
<keyword id="KW-0206">Cytoskeleton</keyword>
<keyword id="KW-0256">Endoplasmic reticulum</keyword>
<keyword id="KW-0333">Golgi apparatus</keyword>
<keyword id="KW-0449">Lipoprotein</keyword>
<keyword id="KW-0472">Membrane</keyword>
<keyword id="KW-0493">Microtubule</keyword>
<keyword id="KW-1185">Reference proteome</keyword>
<protein>
    <recommendedName>
        <fullName evidence="3">Gamma-aminobutyric acid receptor-associated protein-like 1</fullName>
    </recommendedName>
    <alternativeName>
        <fullName>GABA(A) receptor-associated protein-like 1</fullName>
    </alternativeName>
</protein>
<feature type="chain" id="PRO_0000212367" description="Gamma-aminobutyric acid receptor-associated protein-like 1">
    <location>
        <begin position="1"/>
        <end position="116"/>
    </location>
</feature>
<feature type="propeptide" id="PRO_0000420206" description="Removed in mature form" evidence="3">
    <location>
        <position position="117"/>
    </location>
</feature>
<feature type="site" description="Cleavage; by ATG4B" evidence="3">
    <location>
        <begin position="116"/>
        <end position="117"/>
    </location>
</feature>
<feature type="lipid moiety-binding region" description="Phosphatidylethanolamine amidated glycine; alternate" evidence="3">
    <location>
        <position position="116"/>
    </location>
</feature>
<feature type="lipid moiety-binding region" description="Phosphatidylserine amidated glycine; alternate" evidence="3">
    <location>
        <position position="116"/>
    </location>
</feature>
<feature type="sequence conflict" description="In Ref. 2; AAM77035." evidence="4" ref="2">
    <original>V</original>
    <variation>T</variation>
    <location>
        <position position="114"/>
    </location>
</feature>
<feature type="sequence conflict" description="In Ref. 2; AAM77035." evidence="4" ref="2">
    <original>K</original>
    <variation>SA</variation>
    <location>
        <position position="117"/>
    </location>
</feature>
<proteinExistence type="inferred from homology"/>
<comment type="function">
    <text evidence="3">Ubiquitin-like modifier that increases cell-surface expression of kappa-type opioid receptor through facilitating anterograde intracellular trafficking of the receptor. Involved in formation of autophagosomal vacuoles. While LC3s are involved in elongation of the phagophore membrane, the GABARAP/GATE-16 subfamily is essential for a later stage in autophagosome maturation. Through its interaction with the reticulophagy receptor TEX264, participates in the remodeling of subdomains of the endoplasmic reticulum into autophagosomes upon nutrient stress, which then fuse with lysosomes for endoplasmic reticulum turnover.</text>
</comment>
<comment type="subunit">
    <text evidence="2 3">Interacts with ATG13, OPRK1, RB1CC1 and ULK1. Interacts with TP53INP1 and TP53INP2. Directly interacts with SQSTM1. Interacts with ATG3, ATG7 and MAP15. Interacts with TECPR2. Interacts with TBC1D5. Interacts with MAPK15. Interacts with TRIM5. Interacts with MEFV and TRIM21. Interacts with WDFY3. Interacts with the reticulophagy receptor TEX264. Interacts with UBA5. Interacts with KBTBD6 and KBTBD7; the interaction is direct. Interacts with reticulophagy regulators RETREG1, RETREG2 and RETREG3. Interacts with IRGM (By similarity). Interacts with DNM2 (By similarity). Interacts with NCOA4 (via C-terminus) (By similarity).</text>
</comment>
<comment type="subcellular location">
    <subcellularLocation>
        <location evidence="3">Cytoplasmic vesicle</location>
        <location evidence="3">Autophagosome</location>
    </subcellularLocation>
    <subcellularLocation>
        <location evidence="3">Cytoplasmic vesicle membrane</location>
        <topology evidence="3">Lipid-anchor</topology>
    </subcellularLocation>
    <subcellularLocation>
        <location evidence="1">Cytoplasm</location>
        <location evidence="1">Cytoskeleton</location>
    </subcellularLocation>
    <subcellularLocation>
        <location evidence="1">Endoplasmic reticulum</location>
    </subcellularLocation>
    <subcellularLocation>
        <location evidence="1">Golgi apparatus</location>
    </subcellularLocation>
</comment>
<comment type="PTM">
    <text evidence="2 3">The precursor molecule is cleaved by ATG4 (ATG4A, ATG4B, ATG4C or ATG4D) to expose the glycine at the C-terminus and form the cytosolic form, GABARAPL1-I. The processed form is then activated by APG7L/ATG7, transferred to ATG3 and conjugated to phosphatidylethanolamine (PE) phospholipid to form the membrane-bound form, GABARAPL1-II. During non-canonical autophagy, the processed form is conjugated to phosphatidylserine (PS) phospholipid. ATG4 proteins also mediate the delipidation of PE-conjugated forms required for GABARAPL1 recycling when autophagosomes fuse with lysosomes. In addition, ATG4B and ATG4D mediate delipidation of ATG8 proteins conjugated to PS during non-canonical autophagy. ATG4B constitutes the major protein for proteolytic activation (By similarity). ATG4D is the main enzyme for delipidation activity (By similarity).</text>
</comment>
<comment type="similarity">
    <text evidence="4">Belongs to the ATG8 family.</text>
</comment>
<gene>
    <name evidence="3" type="primary">GABARAPL1</name>
</gene>
<evidence type="ECO:0000250" key="1">
    <source>
        <dbReference type="UniProtKB" id="Q0VGK0"/>
    </source>
</evidence>
<evidence type="ECO:0000250" key="2">
    <source>
        <dbReference type="UniProtKB" id="Q8R3R8"/>
    </source>
</evidence>
<evidence type="ECO:0000250" key="3">
    <source>
        <dbReference type="UniProtKB" id="Q9H0R8"/>
    </source>
</evidence>
<evidence type="ECO:0000305" key="4"/>